<name>MURB2_BACCR</name>
<evidence type="ECO:0000250" key="1"/>
<evidence type="ECO:0000305" key="2"/>
<protein>
    <recommendedName>
        <fullName>UDP-N-acetylenolpyruvoylglucosamine reductase 2</fullName>
        <ecNumber>1.3.1.98</ecNumber>
    </recommendedName>
    <alternativeName>
        <fullName>UDP-N-acetylmuramate dehydrogenase 2</fullName>
    </alternativeName>
</protein>
<dbReference type="EC" id="1.3.1.98"/>
<dbReference type="EMBL" id="AE016877">
    <property type="protein sequence ID" value="AAP11932.1"/>
    <property type="molecule type" value="Genomic_DNA"/>
</dbReference>
<dbReference type="RefSeq" id="NP_834731.1">
    <property type="nucleotide sequence ID" value="NC_004722.1"/>
</dbReference>
<dbReference type="SMR" id="Q815R9"/>
<dbReference type="STRING" id="226900.BC_5063"/>
<dbReference type="KEGG" id="bce:BC5063"/>
<dbReference type="PATRIC" id="fig|226900.8.peg.5222"/>
<dbReference type="HOGENOM" id="CLU_035304_1_1_9"/>
<dbReference type="OrthoDB" id="9804753at2"/>
<dbReference type="UniPathway" id="UPA00219"/>
<dbReference type="Proteomes" id="UP000001417">
    <property type="component" value="Chromosome"/>
</dbReference>
<dbReference type="GO" id="GO:0005829">
    <property type="term" value="C:cytosol"/>
    <property type="evidence" value="ECO:0000318"/>
    <property type="project" value="GO_Central"/>
</dbReference>
<dbReference type="GO" id="GO:0071949">
    <property type="term" value="F:FAD binding"/>
    <property type="evidence" value="ECO:0007669"/>
    <property type="project" value="InterPro"/>
</dbReference>
<dbReference type="GO" id="GO:0050660">
    <property type="term" value="F:flavin adenine dinucleotide binding"/>
    <property type="evidence" value="ECO:0000318"/>
    <property type="project" value="GO_Central"/>
</dbReference>
<dbReference type="GO" id="GO:0008762">
    <property type="term" value="F:UDP-N-acetylmuramate dehydrogenase activity"/>
    <property type="evidence" value="ECO:0000318"/>
    <property type="project" value="GO_Central"/>
</dbReference>
<dbReference type="GO" id="GO:0051301">
    <property type="term" value="P:cell division"/>
    <property type="evidence" value="ECO:0007669"/>
    <property type="project" value="UniProtKB-KW"/>
</dbReference>
<dbReference type="GO" id="GO:0071555">
    <property type="term" value="P:cell wall organization"/>
    <property type="evidence" value="ECO:0000318"/>
    <property type="project" value="GO_Central"/>
</dbReference>
<dbReference type="GO" id="GO:0009252">
    <property type="term" value="P:peptidoglycan biosynthetic process"/>
    <property type="evidence" value="ECO:0007669"/>
    <property type="project" value="UniProtKB-UniRule"/>
</dbReference>
<dbReference type="GO" id="GO:0008360">
    <property type="term" value="P:regulation of cell shape"/>
    <property type="evidence" value="ECO:0007669"/>
    <property type="project" value="UniProtKB-KW"/>
</dbReference>
<dbReference type="FunFam" id="3.30.465.10:FF:000019">
    <property type="entry name" value="UDP-N-acetylenolpyruvoylglucosamine reductase"/>
    <property type="match status" value="1"/>
</dbReference>
<dbReference type="FunFam" id="3.90.78.10:FF:000001">
    <property type="entry name" value="UDP-N-acetylenolpyruvoylglucosamine reductase"/>
    <property type="match status" value="1"/>
</dbReference>
<dbReference type="Gene3D" id="3.30.465.10">
    <property type="match status" value="1"/>
</dbReference>
<dbReference type="Gene3D" id="3.90.78.10">
    <property type="entry name" value="UDP-N-acetylenolpyruvoylglucosamine reductase, C-terminal domain"/>
    <property type="match status" value="1"/>
</dbReference>
<dbReference type="Gene3D" id="3.30.43.10">
    <property type="entry name" value="Uridine Diphospho-n-acetylenolpyruvylglucosamine Reductase, domain 2"/>
    <property type="match status" value="1"/>
</dbReference>
<dbReference type="HAMAP" id="MF_00037">
    <property type="entry name" value="MurB"/>
    <property type="match status" value="1"/>
</dbReference>
<dbReference type="InterPro" id="IPR016166">
    <property type="entry name" value="FAD-bd_PCMH"/>
</dbReference>
<dbReference type="InterPro" id="IPR036318">
    <property type="entry name" value="FAD-bd_PCMH-like_sf"/>
</dbReference>
<dbReference type="InterPro" id="IPR016167">
    <property type="entry name" value="FAD-bd_PCMH_sub1"/>
</dbReference>
<dbReference type="InterPro" id="IPR016169">
    <property type="entry name" value="FAD-bd_PCMH_sub2"/>
</dbReference>
<dbReference type="InterPro" id="IPR003170">
    <property type="entry name" value="MurB"/>
</dbReference>
<dbReference type="InterPro" id="IPR011601">
    <property type="entry name" value="MurB_C"/>
</dbReference>
<dbReference type="InterPro" id="IPR036635">
    <property type="entry name" value="MurB_C_sf"/>
</dbReference>
<dbReference type="InterPro" id="IPR006094">
    <property type="entry name" value="Oxid_FAD_bind_N"/>
</dbReference>
<dbReference type="NCBIfam" id="TIGR00179">
    <property type="entry name" value="murB"/>
    <property type="match status" value="1"/>
</dbReference>
<dbReference type="NCBIfam" id="NF010480">
    <property type="entry name" value="PRK13905.1"/>
    <property type="match status" value="1"/>
</dbReference>
<dbReference type="PANTHER" id="PTHR21071">
    <property type="entry name" value="UDP-N-ACETYLENOLPYRUVOYLGLUCOSAMINE REDUCTASE"/>
    <property type="match status" value="1"/>
</dbReference>
<dbReference type="PANTHER" id="PTHR21071:SF4">
    <property type="entry name" value="UDP-N-ACETYLENOLPYRUVOYLGLUCOSAMINE REDUCTASE"/>
    <property type="match status" value="1"/>
</dbReference>
<dbReference type="Pfam" id="PF01565">
    <property type="entry name" value="FAD_binding_4"/>
    <property type="match status" value="1"/>
</dbReference>
<dbReference type="Pfam" id="PF02873">
    <property type="entry name" value="MurB_C"/>
    <property type="match status" value="1"/>
</dbReference>
<dbReference type="SUPFAM" id="SSF56176">
    <property type="entry name" value="FAD-binding/transporter-associated domain-like"/>
    <property type="match status" value="1"/>
</dbReference>
<dbReference type="SUPFAM" id="SSF56194">
    <property type="entry name" value="Uridine diphospho-N-Acetylenolpyruvylglucosamine reductase, MurB, C-terminal domain"/>
    <property type="match status" value="1"/>
</dbReference>
<dbReference type="PROSITE" id="PS51387">
    <property type="entry name" value="FAD_PCMH"/>
    <property type="match status" value="1"/>
</dbReference>
<reference key="1">
    <citation type="journal article" date="2003" name="Nature">
        <title>Genome sequence of Bacillus cereus and comparative analysis with Bacillus anthracis.</title>
        <authorList>
            <person name="Ivanova N."/>
            <person name="Sorokin A."/>
            <person name="Anderson I."/>
            <person name="Galleron N."/>
            <person name="Candelon B."/>
            <person name="Kapatral V."/>
            <person name="Bhattacharyya A."/>
            <person name="Reznik G."/>
            <person name="Mikhailova N."/>
            <person name="Lapidus A."/>
            <person name="Chu L."/>
            <person name="Mazur M."/>
            <person name="Goltsman E."/>
            <person name="Larsen N."/>
            <person name="D'Souza M."/>
            <person name="Walunas T."/>
            <person name="Grechkin Y."/>
            <person name="Pusch G."/>
            <person name="Haselkorn R."/>
            <person name="Fonstein M."/>
            <person name="Ehrlich S.D."/>
            <person name="Overbeek R."/>
            <person name="Kyrpides N.C."/>
        </authorList>
    </citation>
    <scope>NUCLEOTIDE SEQUENCE [LARGE SCALE GENOMIC DNA]</scope>
    <source>
        <strain>ATCC 14579 / DSM 31 / CCUG 7414 / JCM 2152 / NBRC 15305 / NCIMB 9373 / NCTC 2599 / NRRL B-3711</strain>
    </source>
</reference>
<gene>
    <name type="primary">murB2</name>
    <name type="ordered locus">BC_5063</name>
</gene>
<sequence>MNMQEVYKYLSTVLPEGHVKQDEMLKNHTHIKVGGKADVFVAPTNYDEIQEVIKYANEYNIPVTFLGNGSNVIIKDGGIRGITVSLIHITGVTVTGTTIVAQCGAAIIDVSRIALDHNLTGLEFACGIPGSVGGALYMNAGAYGGEISFVLTEAVVMTGDGELRTLTKEAFEFGYRKSVFANNHYIILEARFELEEGVHEEIKAKMDDLTFKRESKQPLEYPSCGSVFKRPPNNFAGKLIQDSGLQGKRIGGVEVSLKHAGFMVNVDNGTAQDYIDLIHFVQKTVEEKFGVKLEREVRIIGEDKE</sequence>
<organism>
    <name type="scientific">Bacillus cereus (strain ATCC 14579 / DSM 31 / CCUG 7414 / JCM 2152 / NBRC 15305 / NCIMB 9373 / NCTC 2599 / NRRL B-3711)</name>
    <dbReference type="NCBI Taxonomy" id="226900"/>
    <lineage>
        <taxon>Bacteria</taxon>
        <taxon>Bacillati</taxon>
        <taxon>Bacillota</taxon>
        <taxon>Bacilli</taxon>
        <taxon>Bacillales</taxon>
        <taxon>Bacillaceae</taxon>
        <taxon>Bacillus</taxon>
        <taxon>Bacillus cereus group</taxon>
    </lineage>
</organism>
<feature type="chain" id="PRO_0000179175" description="UDP-N-acetylenolpyruvoylglucosamine reductase 2">
    <location>
        <begin position="1"/>
        <end position="305"/>
    </location>
</feature>
<feature type="domain" description="FAD-binding PCMH-type">
    <location>
        <begin position="33"/>
        <end position="197"/>
    </location>
</feature>
<feature type="active site" evidence="1">
    <location>
        <position position="176"/>
    </location>
</feature>
<feature type="active site" description="Proton donor" evidence="1">
    <location>
        <position position="226"/>
    </location>
</feature>
<feature type="active site" evidence="1">
    <location>
        <position position="296"/>
    </location>
</feature>
<keyword id="KW-0131">Cell cycle</keyword>
<keyword id="KW-0132">Cell division</keyword>
<keyword id="KW-0133">Cell shape</keyword>
<keyword id="KW-0961">Cell wall biogenesis/degradation</keyword>
<keyword id="KW-0963">Cytoplasm</keyword>
<keyword id="KW-0274">FAD</keyword>
<keyword id="KW-0285">Flavoprotein</keyword>
<keyword id="KW-0521">NADP</keyword>
<keyword id="KW-0560">Oxidoreductase</keyword>
<keyword id="KW-0573">Peptidoglycan synthesis</keyword>
<keyword id="KW-1185">Reference proteome</keyword>
<proteinExistence type="inferred from homology"/>
<accession>Q815R9</accession>
<comment type="function">
    <text evidence="1">Cell wall formation.</text>
</comment>
<comment type="catalytic activity">
    <reaction>
        <text>UDP-N-acetyl-alpha-D-muramate + NADP(+) = UDP-N-acetyl-3-O-(1-carboxyvinyl)-alpha-D-glucosamine + NADPH + H(+)</text>
        <dbReference type="Rhea" id="RHEA:12248"/>
        <dbReference type="ChEBI" id="CHEBI:15378"/>
        <dbReference type="ChEBI" id="CHEBI:57783"/>
        <dbReference type="ChEBI" id="CHEBI:58349"/>
        <dbReference type="ChEBI" id="CHEBI:68483"/>
        <dbReference type="ChEBI" id="CHEBI:70757"/>
        <dbReference type="EC" id="1.3.1.98"/>
    </reaction>
</comment>
<comment type="cofactor">
    <cofactor evidence="1">
        <name>FAD</name>
        <dbReference type="ChEBI" id="CHEBI:57692"/>
    </cofactor>
</comment>
<comment type="pathway">
    <text>Cell wall biogenesis; peptidoglycan biosynthesis.</text>
</comment>
<comment type="subcellular location">
    <subcellularLocation>
        <location evidence="1">Cytoplasm</location>
    </subcellularLocation>
</comment>
<comment type="similarity">
    <text evidence="2">Belongs to the MurB family.</text>
</comment>